<keyword id="KW-0034">Amyloid</keyword>
<keyword id="KW-1003">Cell membrane</keyword>
<keyword id="KW-0186">Copper</keyword>
<keyword id="KW-1015">Disulfide bond</keyword>
<keyword id="KW-0325">Glycoprotein</keyword>
<keyword id="KW-0333">Golgi apparatus</keyword>
<keyword id="KW-0336">GPI-anchor</keyword>
<keyword id="KW-0449">Lipoprotein</keyword>
<keyword id="KW-0472">Membrane</keyword>
<keyword id="KW-0479">Metal-binding</keyword>
<keyword id="KW-0640">Prion</keyword>
<keyword id="KW-0677">Repeat</keyword>
<keyword id="KW-0732">Signal</keyword>
<keyword id="KW-0862">Zinc</keyword>
<comment type="function">
    <text evidence="2 4">Its primary physiological function is unclear. Has cytoprotective activity against internal or environmental stresses. May play a role in neuronal development and synaptic plasticity. May be required for neuronal myelin sheath maintenance. May play a role in iron uptake and iron homeostasis. Soluble oligomers are toxic to cultured neuroblastoma cells and induce apoptosis (in vitro). Association with GPC1 (via its heparan sulfate chains) targets PRNP to lipid rafts. Also provides Cu(2+) or Zn(2+) for the ascorbate-mediated GPC1 deaminase degradation of its heparan sulfate side chains (By similarity).</text>
</comment>
<comment type="subunit">
    <text evidence="2 4">Monomer and homodimer. Has a tendency to aggregate into amyloid fibrils containing a cross-beta spine, formed by a steric zipper of superposed beta-strands. Soluble oligomers may represent an intermediate stage on the path to fibril formation. Copper binding may promote oligomerization. Interacts with GRB2, APP, ERI3/PRNPIP and SYN1. Mislocalized cytosolically exposed PrP interacts with MGRN1; this interaction alters MGRN1 subcellular location and causes lysosomal enlargement. Interacts with KIAA1191.</text>
</comment>
<comment type="subcellular location">
    <subcellularLocation>
        <location evidence="2">Cell membrane</location>
        <topology evidence="2">Lipid-anchor</topology>
        <topology evidence="2">GPI-anchor</topology>
    </subcellularLocation>
    <subcellularLocation>
        <location evidence="4">Golgi apparatus</location>
    </subcellularLocation>
    <text evidence="2">Targeted to lipid rafts via association with the heparan sulfate chains of GPC1. Colocates, in the presence of Cu(2+), to vesicles in para- and perinuclear regions, where both proteins undergo internalization. Heparin displaces PRNP from lipid rafts and promotes endocytosis.</text>
</comment>
<comment type="domain">
    <text evidence="2">The normal, monomeric form has a mainly alpha-helical structure. The disease-associated, protease-resistant form forms amyloid fibrils containing a cross-beta spine, formed by a steric zipper of superposed beta-strands. Disease mutations may favor intermolecular contacts via short beta strands, and may thereby trigger oligomerization.</text>
</comment>
<comment type="domain">
    <text evidence="2">Contains an N-terminal region composed of octamer repeats. At low copper concentrations, the sidechains of His residues from three or four repeats contribute to the binding of a single copper ion. Alternatively, a copper ion can be bound by interaction with the sidechain and backbone amide nitrogen of a single His residue. The observed copper binding stoichiometry suggests that two repeat regions cooperate to stabilize the binding of a single copper ion. At higher copper concentrations, each octamer can bind one copper ion by interactions with the His sidechain and Gly backbone atoms. A mixture of binding types may occur, especially in the case of octamer repeat expansion. Copper binding may stabilize the conformation of this region and may promote oligomerization.</text>
</comment>
<comment type="disease">
    <text evidence="7">PrP is found in high quantity in the brain of humans and animals infected with the degenerative neurological diseases kuru, Creutzfeldt-Jakob disease (CJD), Gerstmann-Straussler syndrome (GSS), scrapie, bovine spongiform encephalopathy (BSE), transmissible mink encephalopathy (TME), etc.</text>
</comment>
<comment type="similarity">
    <text evidence="7">Belongs to the prion family.</text>
</comment>
<proteinExistence type="inferred from homology"/>
<gene>
    <name type="primary">PRNP</name>
    <name type="synonym">PRP</name>
</gene>
<reference key="1">
    <citation type="journal article" date="1994" name="Proc. Natl. Acad. Sci. U.S.A.">
        <title>Infectious amyloid precursor gene sequences in primates used for experimental transmission of human spongiform encephalopathy.</title>
        <authorList>
            <person name="Cervenakova L."/>
            <person name="Brown P."/>
            <person name="Goldfarb L.G."/>
            <person name="Nagle J."/>
            <person name="Pettrone K."/>
            <person name="Rubenstein R."/>
            <person name="Dubnick M."/>
            <person name="Gibbs C.J."/>
            <person name="Gajdusek D.C."/>
        </authorList>
    </citation>
    <scope>NUCLEOTIDE SEQUENCE [GENOMIC DNA]</scope>
    <source>
        <tissue>Brain</tissue>
    </source>
</reference>
<organism>
    <name type="scientific">Ateles paniscus</name>
    <name type="common">Black spider monkey</name>
    <name type="synonym">Red-faced black spider monkey</name>
    <dbReference type="NCBI Taxonomy" id="9510"/>
    <lineage>
        <taxon>Eukaryota</taxon>
        <taxon>Metazoa</taxon>
        <taxon>Chordata</taxon>
        <taxon>Craniata</taxon>
        <taxon>Vertebrata</taxon>
        <taxon>Euteleostomi</taxon>
        <taxon>Mammalia</taxon>
        <taxon>Eutheria</taxon>
        <taxon>Euarchontoglires</taxon>
        <taxon>Primates</taxon>
        <taxon>Haplorrhini</taxon>
        <taxon>Platyrrhini</taxon>
        <taxon>Atelidae</taxon>
        <taxon>Atelinae</taxon>
        <taxon>Ateles</taxon>
    </lineage>
</organism>
<sequence length="252" mass="27718">MANLGYWMLVLFVATWSDLGLCKKRPKPGGWNTGGSRYPGQGSPGGNRYPPQGGGWGQPHGGGWGQPHGGGWGQPHGGGWGQPHGGGWGQAGGTHNQWNKPSKPKTNMKHMAGAAAAGAVVGGLGGYMLGSAMSRPLIHFGNDYEDRYYRENMYRYPNQVYYRPVDQYNNQNNFVHDCVNITIKQHTVTTTTKGENLTETDVKMMERVVEQMCITQYERESQAYYQRGSSMVLFSSPPVILLISFLIFLIVG</sequence>
<accession>P51446</accession>
<evidence type="ECO:0000250" key="1"/>
<evidence type="ECO:0000250" key="2">
    <source>
        <dbReference type="UniProtKB" id="P04156"/>
    </source>
</evidence>
<evidence type="ECO:0000250" key="3">
    <source>
        <dbReference type="UniProtKB" id="P04273"/>
    </source>
</evidence>
<evidence type="ECO:0000250" key="4">
    <source>
        <dbReference type="UniProtKB" id="P04925"/>
    </source>
</evidence>
<evidence type="ECO:0000255" key="5"/>
<evidence type="ECO:0000256" key="6">
    <source>
        <dbReference type="SAM" id="MobiDB-lite"/>
    </source>
</evidence>
<evidence type="ECO:0000305" key="7"/>
<dbReference type="EMBL" id="U15164">
    <property type="protein sequence ID" value="AAA68634.1"/>
    <property type="molecule type" value="Genomic_DNA"/>
</dbReference>
<dbReference type="SMR" id="P51446"/>
<dbReference type="GlyCosmos" id="P51446">
    <property type="glycosylation" value="2 sites, No reported glycans"/>
</dbReference>
<dbReference type="GO" id="GO:0005794">
    <property type="term" value="C:Golgi apparatus"/>
    <property type="evidence" value="ECO:0007669"/>
    <property type="project" value="UniProtKB-SubCell"/>
</dbReference>
<dbReference type="GO" id="GO:0005886">
    <property type="term" value="C:plasma membrane"/>
    <property type="evidence" value="ECO:0007669"/>
    <property type="project" value="UniProtKB-SubCell"/>
</dbReference>
<dbReference type="GO" id="GO:0098552">
    <property type="term" value="C:side of membrane"/>
    <property type="evidence" value="ECO:0007669"/>
    <property type="project" value="UniProtKB-KW"/>
</dbReference>
<dbReference type="GO" id="GO:0005507">
    <property type="term" value="F:copper ion binding"/>
    <property type="evidence" value="ECO:0000250"/>
    <property type="project" value="UniProtKB"/>
</dbReference>
<dbReference type="GO" id="GO:0051260">
    <property type="term" value="P:protein homooligomerization"/>
    <property type="evidence" value="ECO:0007669"/>
    <property type="project" value="InterPro"/>
</dbReference>
<dbReference type="FunFam" id="1.10.790.10:FF:000001">
    <property type="entry name" value="Major prion protein"/>
    <property type="match status" value="1"/>
</dbReference>
<dbReference type="Gene3D" id="1.10.790.10">
    <property type="entry name" value="Prion/Doppel protein, beta-ribbon domain"/>
    <property type="match status" value="1"/>
</dbReference>
<dbReference type="InterPro" id="IPR000817">
    <property type="entry name" value="Prion"/>
</dbReference>
<dbReference type="InterPro" id="IPR036924">
    <property type="entry name" value="Prion/Doppel_b-ribbon_dom_sf"/>
</dbReference>
<dbReference type="InterPro" id="IPR022416">
    <property type="entry name" value="Prion/Doppel_prot_b-ribbon_dom"/>
</dbReference>
<dbReference type="InterPro" id="IPR020949">
    <property type="entry name" value="Prion_copper_b_octapeptide"/>
</dbReference>
<dbReference type="InterPro" id="IPR025860">
    <property type="entry name" value="Prion_N"/>
</dbReference>
<dbReference type="PANTHER" id="PTHR15506">
    <property type="entry name" value="DOPPEL PRION"/>
    <property type="match status" value="1"/>
</dbReference>
<dbReference type="PANTHER" id="PTHR15506:SF2">
    <property type="entry name" value="MAJOR PRION PROTEIN"/>
    <property type="match status" value="1"/>
</dbReference>
<dbReference type="Pfam" id="PF00377">
    <property type="entry name" value="Prion"/>
    <property type="match status" value="1"/>
</dbReference>
<dbReference type="Pfam" id="PF11587">
    <property type="entry name" value="Prion_bPrPp"/>
    <property type="match status" value="1"/>
</dbReference>
<dbReference type="Pfam" id="PF03991">
    <property type="entry name" value="Prion_octapep"/>
    <property type="match status" value="1"/>
</dbReference>
<dbReference type="PRINTS" id="PR00341">
    <property type="entry name" value="PRION"/>
</dbReference>
<dbReference type="SMART" id="SM00157">
    <property type="entry name" value="PRP"/>
    <property type="match status" value="1"/>
</dbReference>
<dbReference type="SUPFAM" id="SSF54098">
    <property type="entry name" value="Prion-like"/>
    <property type="match status" value="1"/>
</dbReference>
<dbReference type="PROSITE" id="PS00291">
    <property type="entry name" value="PRION_1"/>
    <property type="match status" value="1"/>
</dbReference>
<dbReference type="PROSITE" id="PS00706">
    <property type="entry name" value="PRION_2"/>
    <property type="match status" value="1"/>
</dbReference>
<name>PRIO_ATEPA</name>
<feature type="signal peptide" evidence="1">
    <location>
        <begin position="1"/>
        <end position="22"/>
    </location>
</feature>
<feature type="chain" id="PRO_0000025617" description="Major prion protein">
    <location>
        <begin position="23"/>
        <end position="229"/>
    </location>
</feature>
<feature type="propeptide" id="PRO_0000025618" description="Removed in mature form" evidence="1">
    <location>
        <begin position="230"/>
        <end position="252"/>
    </location>
</feature>
<feature type="repeat" description="1">
    <location>
        <begin position="51"/>
        <end position="58"/>
    </location>
</feature>
<feature type="repeat" description="2">
    <location>
        <begin position="59"/>
        <end position="66"/>
    </location>
</feature>
<feature type="repeat" description="3">
    <location>
        <begin position="67"/>
        <end position="74"/>
    </location>
</feature>
<feature type="repeat" description="4">
    <location>
        <begin position="75"/>
        <end position="82"/>
    </location>
</feature>
<feature type="repeat" description="5">
    <location>
        <begin position="83"/>
        <end position="90"/>
    </location>
</feature>
<feature type="region of interest" description="Interaction with GRB2, ERI3 and SYN1" evidence="4">
    <location>
        <begin position="23"/>
        <end position="229"/>
    </location>
</feature>
<feature type="region of interest" description="Disordered" evidence="6">
    <location>
        <begin position="26"/>
        <end position="104"/>
    </location>
</feature>
<feature type="region of interest" description="5 X 8 AA tandem repeats of P-H-G-G-G-W-G-Q">
    <location>
        <begin position="51"/>
        <end position="90"/>
    </location>
</feature>
<feature type="compositionally biased region" description="Gly residues" evidence="6">
    <location>
        <begin position="52"/>
        <end position="92"/>
    </location>
</feature>
<feature type="binding site" evidence="2">
    <location>
        <position position="60"/>
    </location>
    <ligand>
        <name>Cu(2+)</name>
        <dbReference type="ChEBI" id="CHEBI:29036"/>
        <label>1</label>
    </ligand>
</feature>
<feature type="binding site" evidence="2">
    <location>
        <position position="61"/>
    </location>
    <ligand>
        <name>Cu(2+)</name>
        <dbReference type="ChEBI" id="CHEBI:29036"/>
        <label>1</label>
    </ligand>
</feature>
<feature type="binding site" evidence="2">
    <location>
        <position position="62"/>
    </location>
    <ligand>
        <name>Cu(2+)</name>
        <dbReference type="ChEBI" id="CHEBI:29036"/>
        <label>1</label>
    </ligand>
</feature>
<feature type="binding site" evidence="2">
    <location>
        <position position="68"/>
    </location>
    <ligand>
        <name>Cu(2+)</name>
        <dbReference type="ChEBI" id="CHEBI:29036"/>
        <label>2</label>
    </ligand>
</feature>
<feature type="binding site" evidence="2">
    <location>
        <position position="69"/>
    </location>
    <ligand>
        <name>Cu(2+)</name>
        <dbReference type="ChEBI" id="CHEBI:29036"/>
        <label>2</label>
    </ligand>
</feature>
<feature type="binding site" evidence="2">
    <location>
        <position position="70"/>
    </location>
    <ligand>
        <name>Cu(2+)</name>
        <dbReference type="ChEBI" id="CHEBI:29036"/>
        <label>2</label>
    </ligand>
</feature>
<feature type="binding site" evidence="2">
    <location>
        <position position="76"/>
    </location>
    <ligand>
        <name>Cu(2+)</name>
        <dbReference type="ChEBI" id="CHEBI:29036"/>
        <label>3</label>
    </ligand>
</feature>
<feature type="binding site" evidence="2">
    <location>
        <position position="77"/>
    </location>
    <ligand>
        <name>Cu(2+)</name>
        <dbReference type="ChEBI" id="CHEBI:29036"/>
        <label>3</label>
    </ligand>
</feature>
<feature type="binding site" evidence="2">
    <location>
        <position position="78"/>
    </location>
    <ligand>
        <name>Cu(2+)</name>
        <dbReference type="ChEBI" id="CHEBI:29036"/>
        <label>3</label>
    </ligand>
</feature>
<feature type="binding site" evidence="2">
    <location>
        <position position="84"/>
    </location>
    <ligand>
        <name>Cu(2+)</name>
        <dbReference type="ChEBI" id="CHEBI:29036"/>
        <label>4</label>
    </ligand>
</feature>
<feature type="binding site" evidence="2">
    <location>
        <position position="85"/>
    </location>
    <ligand>
        <name>Cu(2+)</name>
        <dbReference type="ChEBI" id="CHEBI:29036"/>
        <label>4</label>
    </ligand>
</feature>
<feature type="binding site" evidence="2">
    <location>
        <position position="86"/>
    </location>
    <ligand>
        <name>Cu(2+)</name>
        <dbReference type="ChEBI" id="CHEBI:29036"/>
        <label>4</label>
    </ligand>
</feature>
<feature type="lipid moiety-binding region" description="GPI-anchor amidated serine" evidence="3">
    <location>
        <position position="229"/>
    </location>
</feature>
<feature type="glycosylation site" description="N-linked (GlcNAc...) asparagine" evidence="5">
    <location>
        <position position="180"/>
    </location>
</feature>
<feature type="glycosylation site" description="N-linked (GlcNAc...) asparagine" evidence="5">
    <location>
        <position position="196"/>
    </location>
</feature>
<feature type="disulfide bond" evidence="3">
    <location>
        <begin position="178"/>
        <end position="213"/>
    </location>
</feature>
<protein>
    <recommendedName>
        <fullName>Major prion protein</fullName>
        <shortName>PrP</shortName>
    </recommendedName>
    <alternativeName>
        <fullName>PrP27-30</fullName>
    </alternativeName>
    <alternativeName>
        <fullName>PrP33-35C</fullName>
    </alternativeName>
    <cdAntigenName>CD230</cdAntigenName>
</protein>